<name>ATPB_STRP4</name>
<accession>B5E670</accession>
<keyword id="KW-0066">ATP synthesis</keyword>
<keyword id="KW-0067">ATP-binding</keyword>
<keyword id="KW-1003">Cell membrane</keyword>
<keyword id="KW-0139">CF(1)</keyword>
<keyword id="KW-0375">Hydrogen ion transport</keyword>
<keyword id="KW-0406">Ion transport</keyword>
<keyword id="KW-0472">Membrane</keyword>
<keyword id="KW-0547">Nucleotide-binding</keyword>
<keyword id="KW-1278">Translocase</keyword>
<keyword id="KW-0813">Transport</keyword>
<sequence length="468" mass="50898">MSSGKIAQVIGPVVDVLFAAGEKLPEINNALVVYKNDERKTKIVLEVALELGDGMVRTIAMESTDGLTRGMEVLDTGRPISVPVGKETLGRVFNVLGDTIDLEAPFTEDAERQPIHKKAPTFDELSTSSEILETGIKVIDLLAPYLKGGKVGLFGGAGVGKTVLIQELIHNIAQEHGGISVFTGVGERTREGNDLYWEMKESGVIEKTAMVFGQMNEPPGARMRVALTGLTIAEYFRDVEGQDVLLFIDNIFRFTQAGSEVSALLGRMPSAVGYQPTLATEMGQLQERITSTKKGSVTSIQAIYVPADDYTDPAPATAFAHLDSTTNLERKLVQLGIYPAVDPLASSSRALAPEIVGEEHYAVAAEVKRVLQRYHELQDIIAILGMDELSDEEKTLVARARRIQFFLSQNXNVAEQFTGQPGSYVPVAETVRGFKEILDGKYDHLPEDAFRGVGSIEDVIAKAEKMGF</sequence>
<comment type="function">
    <text evidence="1">Produces ATP from ADP in the presence of a proton gradient across the membrane. The catalytic sites are hosted primarily by the beta subunits.</text>
</comment>
<comment type="catalytic activity">
    <reaction evidence="1">
        <text>ATP + H2O + 4 H(+)(in) = ADP + phosphate + 5 H(+)(out)</text>
        <dbReference type="Rhea" id="RHEA:57720"/>
        <dbReference type="ChEBI" id="CHEBI:15377"/>
        <dbReference type="ChEBI" id="CHEBI:15378"/>
        <dbReference type="ChEBI" id="CHEBI:30616"/>
        <dbReference type="ChEBI" id="CHEBI:43474"/>
        <dbReference type="ChEBI" id="CHEBI:456216"/>
        <dbReference type="EC" id="7.1.2.2"/>
    </reaction>
</comment>
<comment type="subunit">
    <text evidence="1">F-type ATPases have 2 components, CF(1) - the catalytic core - and CF(0) - the membrane proton channel. CF(1) has five subunits: alpha(3), beta(3), gamma(1), delta(1), epsilon(1). CF(0) has three main subunits: a(1), b(2) and c(9-12). The alpha and beta chains form an alternating ring which encloses part of the gamma chain. CF(1) is attached to CF(0) by a central stalk formed by the gamma and epsilon chains, while a peripheral stalk is formed by the delta and b chains.</text>
</comment>
<comment type="subcellular location">
    <subcellularLocation>
        <location evidence="1">Cell membrane</location>
        <topology evidence="1">Peripheral membrane protein</topology>
    </subcellularLocation>
</comment>
<comment type="similarity">
    <text evidence="1">Belongs to the ATPase alpha/beta chains family.</text>
</comment>
<reference key="1">
    <citation type="journal article" date="2001" name="Microb. Drug Resist.">
        <title>Annotated draft genomic sequence from a Streptococcus pneumoniae type 19F clinical isolate.</title>
        <authorList>
            <person name="Dopazo J."/>
            <person name="Mendoza A."/>
            <person name="Herrero J."/>
            <person name="Caldara F."/>
            <person name="Humbert Y."/>
            <person name="Friedli L."/>
            <person name="Guerrier M."/>
            <person name="Grand-Schenk E."/>
            <person name="Gandin C."/>
            <person name="de Francesco M."/>
            <person name="Polissi A."/>
            <person name="Buell G."/>
            <person name="Feger G."/>
            <person name="Garcia E."/>
            <person name="Peitsch M."/>
            <person name="Garcia-Bustos J.F."/>
        </authorList>
    </citation>
    <scope>NUCLEOTIDE SEQUENCE [LARGE SCALE GENOMIC DNA]</scope>
    <source>
        <strain>G54</strain>
    </source>
</reference>
<reference key="2">
    <citation type="submission" date="2008-03" db="EMBL/GenBank/DDBJ databases">
        <title>Pneumococcal beta glucoside metabolism investigated by whole genome comparison.</title>
        <authorList>
            <person name="Mulas L."/>
            <person name="Trappetti C."/>
            <person name="Hakenbeck R."/>
            <person name="Iannelli F."/>
            <person name="Pozzi G."/>
            <person name="Davidsen T.M."/>
            <person name="Tettelin H."/>
            <person name="Oggioni M."/>
        </authorList>
    </citation>
    <scope>NUCLEOTIDE SEQUENCE [LARGE SCALE GENOMIC DNA]</scope>
    <source>
        <strain>G54</strain>
    </source>
</reference>
<protein>
    <recommendedName>
        <fullName evidence="1">ATP synthase subunit beta</fullName>
        <ecNumber evidence="1">7.1.2.2</ecNumber>
    </recommendedName>
    <alternativeName>
        <fullName evidence="1">ATP synthase F1 sector subunit beta</fullName>
    </alternativeName>
    <alternativeName>
        <fullName evidence="1">F-ATPase subunit beta</fullName>
    </alternativeName>
</protein>
<feature type="chain" id="PRO_1000143552" description="ATP synthase subunit beta">
    <location>
        <begin position="1"/>
        <end position="468"/>
    </location>
</feature>
<feature type="binding site" evidence="1">
    <location>
        <begin position="155"/>
        <end position="162"/>
    </location>
    <ligand>
        <name>ATP</name>
        <dbReference type="ChEBI" id="CHEBI:30616"/>
    </ligand>
</feature>
<gene>
    <name evidence="1" type="primary">atpD</name>
    <name type="ordered locus">SPG_1430</name>
</gene>
<proteinExistence type="inferred from homology"/>
<evidence type="ECO:0000255" key="1">
    <source>
        <dbReference type="HAMAP-Rule" id="MF_01347"/>
    </source>
</evidence>
<organism>
    <name type="scientific">Streptococcus pneumoniae serotype 19F (strain G54)</name>
    <dbReference type="NCBI Taxonomy" id="512566"/>
    <lineage>
        <taxon>Bacteria</taxon>
        <taxon>Bacillati</taxon>
        <taxon>Bacillota</taxon>
        <taxon>Bacilli</taxon>
        <taxon>Lactobacillales</taxon>
        <taxon>Streptococcaceae</taxon>
        <taxon>Streptococcus</taxon>
    </lineage>
</organism>
<dbReference type="EC" id="7.1.2.2" evidence="1"/>
<dbReference type="EMBL" id="CP001015">
    <property type="protein sequence ID" value="ACF55583.1"/>
    <property type="molecule type" value="Genomic_DNA"/>
</dbReference>
<dbReference type="KEGG" id="spx:SPG_1430"/>
<dbReference type="HOGENOM" id="CLU_022398_0_2_9"/>
<dbReference type="GO" id="GO:0005886">
    <property type="term" value="C:plasma membrane"/>
    <property type="evidence" value="ECO:0007669"/>
    <property type="project" value="UniProtKB-SubCell"/>
</dbReference>
<dbReference type="GO" id="GO:0045259">
    <property type="term" value="C:proton-transporting ATP synthase complex"/>
    <property type="evidence" value="ECO:0007669"/>
    <property type="project" value="UniProtKB-KW"/>
</dbReference>
<dbReference type="GO" id="GO:0005524">
    <property type="term" value="F:ATP binding"/>
    <property type="evidence" value="ECO:0007669"/>
    <property type="project" value="UniProtKB-UniRule"/>
</dbReference>
<dbReference type="GO" id="GO:0016887">
    <property type="term" value="F:ATP hydrolysis activity"/>
    <property type="evidence" value="ECO:0007669"/>
    <property type="project" value="InterPro"/>
</dbReference>
<dbReference type="GO" id="GO:0046933">
    <property type="term" value="F:proton-transporting ATP synthase activity, rotational mechanism"/>
    <property type="evidence" value="ECO:0007669"/>
    <property type="project" value="UniProtKB-UniRule"/>
</dbReference>
<dbReference type="CDD" id="cd18110">
    <property type="entry name" value="ATP-synt_F1_beta_C"/>
    <property type="match status" value="1"/>
</dbReference>
<dbReference type="CDD" id="cd18115">
    <property type="entry name" value="ATP-synt_F1_beta_N"/>
    <property type="match status" value="1"/>
</dbReference>
<dbReference type="CDD" id="cd01133">
    <property type="entry name" value="F1-ATPase_beta_CD"/>
    <property type="match status" value="1"/>
</dbReference>
<dbReference type="FunFam" id="1.10.1140.10:FF:000001">
    <property type="entry name" value="ATP synthase subunit beta"/>
    <property type="match status" value="1"/>
</dbReference>
<dbReference type="FunFam" id="2.40.10.170:FF:000005">
    <property type="entry name" value="ATP synthase subunit beta"/>
    <property type="match status" value="1"/>
</dbReference>
<dbReference type="FunFam" id="3.40.50.300:FF:000004">
    <property type="entry name" value="ATP synthase subunit beta"/>
    <property type="match status" value="1"/>
</dbReference>
<dbReference type="Gene3D" id="2.40.10.170">
    <property type="match status" value="1"/>
</dbReference>
<dbReference type="Gene3D" id="1.10.1140.10">
    <property type="entry name" value="Bovine Mitochondrial F1-atpase, Atp Synthase Beta Chain, Chain D, domain 3"/>
    <property type="match status" value="1"/>
</dbReference>
<dbReference type="Gene3D" id="3.40.50.300">
    <property type="entry name" value="P-loop containing nucleotide triphosphate hydrolases"/>
    <property type="match status" value="1"/>
</dbReference>
<dbReference type="HAMAP" id="MF_01347">
    <property type="entry name" value="ATP_synth_beta_bact"/>
    <property type="match status" value="1"/>
</dbReference>
<dbReference type="InterPro" id="IPR003593">
    <property type="entry name" value="AAA+_ATPase"/>
</dbReference>
<dbReference type="InterPro" id="IPR055190">
    <property type="entry name" value="ATP-synt_VA_C"/>
</dbReference>
<dbReference type="InterPro" id="IPR005722">
    <property type="entry name" value="ATP_synth_F1_bsu"/>
</dbReference>
<dbReference type="InterPro" id="IPR020003">
    <property type="entry name" value="ATPase_a/bsu_AS"/>
</dbReference>
<dbReference type="InterPro" id="IPR050053">
    <property type="entry name" value="ATPase_alpha/beta_chains"/>
</dbReference>
<dbReference type="InterPro" id="IPR004100">
    <property type="entry name" value="ATPase_F1/V1/A1_a/bsu_N"/>
</dbReference>
<dbReference type="InterPro" id="IPR036121">
    <property type="entry name" value="ATPase_F1/V1/A1_a/bsu_N_sf"/>
</dbReference>
<dbReference type="InterPro" id="IPR000194">
    <property type="entry name" value="ATPase_F1/V1/A1_a/bsu_nucl-bd"/>
</dbReference>
<dbReference type="InterPro" id="IPR024034">
    <property type="entry name" value="ATPase_F1/V1_b/a_C"/>
</dbReference>
<dbReference type="InterPro" id="IPR027417">
    <property type="entry name" value="P-loop_NTPase"/>
</dbReference>
<dbReference type="NCBIfam" id="TIGR01039">
    <property type="entry name" value="atpD"/>
    <property type="match status" value="1"/>
</dbReference>
<dbReference type="PANTHER" id="PTHR15184">
    <property type="entry name" value="ATP SYNTHASE"/>
    <property type="match status" value="1"/>
</dbReference>
<dbReference type="PANTHER" id="PTHR15184:SF71">
    <property type="entry name" value="ATP SYNTHASE SUBUNIT BETA, MITOCHONDRIAL"/>
    <property type="match status" value="1"/>
</dbReference>
<dbReference type="Pfam" id="PF00006">
    <property type="entry name" value="ATP-synt_ab"/>
    <property type="match status" value="1"/>
</dbReference>
<dbReference type="Pfam" id="PF02874">
    <property type="entry name" value="ATP-synt_ab_N"/>
    <property type="match status" value="1"/>
</dbReference>
<dbReference type="Pfam" id="PF22919">
    <property type="entry name" value="ATP-synt_VA_C"/>
    <property type="match status" value="1"/>
</dbReference>
<dbReference type="SMART" id="SM00382">
    <property type="entry name" value="AAA"/>
    <property type="match status" value="1"/>
</dbReference>
<dbReference type="SUPFAM" id="SSF47917">
    <property type="entry name" value="C-terminal domain of alpha and beta subunits of F1 ATP synthase"/>
    <property type="match status" value="1"/>
</dbReference>
<dbReference type="SUPFAM" id="SSF50615">
    <property type="entry name" value="N-terminal domain of alpha and beta subunits of F1 ATP synthase"/>
    <property type="match status" value="1"/>
</dbReference>
<dbReference type="SUPFAM" id="SSF52540">
    <property type="entry name" value="P-loop containing nucleoside triphosphate hydrolases"/>
    <property type="match status" value="1"/>
</dbReference>
<dbReference type="PROSITE" id="PS00152">
    <property type="entry name" value="ATPASE_ALPHA_BETA"/>
    <property type="match status" value="1"/>
</dbReference>